<gene>
    <name evidence="1" type="primary">fmt</name>
    <name type="ordered locus">NGR_c00580</name>
</gene>
<name>FMT_SINFN</name>
<comment type="function">
    <text evidence="1">Attaches a formyl group to the free amino group of methionyl-tRNA(fMet). The formyl group appears to play a dual role in the initiator identity of N-formylmethionyl-tRNA by promoting its recognition by IF2 and preventing the misappropriation of this tRNA by the elongation apparatus.</text>
</comment>
<comment type="catalytic activity">
    <reaction evidence="1">
        <text>L-methionyl-tRNA(fMet) + (6R)-10-formyltetrahydrofolate = N-formyl-L-methionyl-tRNA(fMet) + (6S)-5,6,7,8-tetrahydrofolate + H(+)</text>
        <dbReference type="Rhea" id="RHEA:24380"/>
        <dbReference type="Rhea" id="RHEA-COMP:9952"/>
        <dbReference type="Rhea" id="RHEA-COMP:9953"/>
        <dbReference type="ChEBI" id="CHEBI:15378"/>
        <dbReference type="ChEBI" id="CHEBI:57453"/>
        <dbReference type="ChEBI" id="CHEBI:78530"/>
        <dbReference type="ChEBI" id="CHEBI:78844"/>
        <dbReference type="ChEBI" id="CHEBI:195366"/>
        <dbReference type="EC" id="2.1.2.9"/>
    </reaction>
</comment>
<comment type="similarity">
    <text evidence="1">Belongs to the Fmt family.</text>
</comment>
<protein>
    <recommendedName>
        <fullName evidence="1">Methionyl-tRNA formyltransferase</fullName>
        <ecNumber evidence="1">2.1.2.9</ecNumber>
    </recommendedName>
</protein>
<feature type="chain" id="PRO_1000190035" description="Methionyl-tRNA formyltransferase">
    <location>
        <begin position="1"/>
        <end position="311"/>
    </location>
</feature>
<feature type="binding site" evidence="1">
    <location>
        <begin position="112"/>
        <end position="115"/>
    </location>
    <ligand>
        <name>(6S)-5,6,7,8-tetrahydrofolate</name>
        <dbReference type="ChEBI" id="CHEBI:57453"/>
    </ligand>
</feature>
<sequence length="311" mass="33008">MPLRIIFMGTPEFSVPTLAALVEAGHEIAAVYTQPPRPGGRRGLDLQKSPVHQAAELLGVPVLTPVNFKDAADRQAFRDFNADVAVVVAYGLLLPEEILSGTRYGCYNGHASLLPRWRGAAPIQRAIMAGDRETGMMVMKMDKGLDTGPVALTKTVPIGETMTAGELHDKLMHAGAALMKEAMVKLELGELPLTPQPQEGVLYAAKISKDETRIDFTKPAADVHNHIRGLAPFPGAWFELETAGRTERIKVLGSEPAAGAGAPGTILDDALTIACGDGAVRPTRLQRAGGKPLATPDFLRGSPIAAGTRIC</sequence>
<keyword id="KW-0648">Protein biosynthesis</keyword>
<keyword id="KW-1185">Reference proteome</keyword>
<keyword id="KW-0808">Transferase</keyword>
<proteinExistence type="inferred from homology"/>
<organism>
    <name type="scientific">Sinorhizobium fredii (strain NBRC 101917 / NGR234)</name>
    <dbReference type="NCBI Taxonomy" id="394"/>
    <lineage>
        <taxon>Bacteria</taxon>
        <taxon>Pseudomonadati</taxon>
        <taxon>Pseudomonadota</taxon>
        <taxon>Alphaproteobacteria</taxon>
        <taxon>Hyphomicrobiales</taxon>
        <taxon>Rhizobiaceae</taxon>
        <taxon>Sinorhizobium/Ensifer group</taxon>
        <taxon>Sinorhizobium</taxon>
    </lineage>
</organism>
<evidence type="ECO:0000255" key="1">
    <source>
        <dbReference type="HAMAP-Rule" id="MF_00182"/>
    </source>
</evidence>
<accession>C3MF25</accession>
<dbReference type="EC" id="2.1.2.9" evidence="1"/>
<dbReference type="EMBL" id="CP001389">
    <property type="protein sequence ID" value="ACP23862.1"/>
    <property type="molecule type" value="Genomic_DNA"/>
</dbReference>
<dbReference type="RefSeq" id="WP_012706647.1">
    <property type="nucleotide sequence ID" value="NC_012587.1"/>
</dbReference>
<dbReference type="RefSeq" id="YP_002824615.1">
    <property type="nucleotide sequence ID" value="NC_012587.1"/>
</dbReference>
<dbReference type="SMR" id="C3MF25"/>
<dbReference type="STRING" id="394.NGR_c00580"/>
<dbReference type="KEGG" id="rhi:NGR_c00580"/>
<dbReference type="PATRIC" id="fig|394.7.peg.2851"/>
<dbReference type="eggNOG" id="COG0223">
    <property type="taxonomic scope" value="Bacteria"/>
</dbReference>
<dbReference type="HOGENOM" id="CLU_033347_1_2_5"/>
<dbReference type="OrthoDB" id="9802815at2"/>
<dbReference type="Proteomes" id="UP000001054">
    <property type="component" value="Chromosome"/>
</dbReference>
<dbReference type="GO" id="GO:0005829">
    <property type="term" value="C:cytosol"/>
    <property type="evidence" value="ECO:0007669"/>
    <property type="project" value="TreeGrafter"/>
</dbReference>
<dbReference type="GO" id="GO:0004479">
    <property type="term" value="F:methionyl-tRNA formyltransferase activity"/>
    <property type="evidence" value="ECO:0007669"/>
    <property type="project" value="UniProtKB-UniRule"/>
</dbReference>
<dbReference type="CDD" id="cd08646">
    <property type="entry name" value="FMT_core_Met-tRNA-FMT_N"/>
    <property type="match status" value="1"/>
</dbReference>
<dbReference type="CDD" id="cd08704">
    <property type="entry name" value="Met_tRNA_FMT_C"/>
    <property type="match status" value="1"/>
</dbReference>
<dbReference type="Gene3D" id="3.40.50.12230">
    <property type="match status" value="1"/>
</dbReference>
<dbReference type="HAMAP" id="MF_00182">
    <property type="entry name" value="Formyl_trans"/>
    <property type="match status" value="1"/>
</dbReference>
<dbReference type="InterPro" id="IPR005794">
    <property type="entry name" value="Fmt"/>
</dbReference>
<dbReference type="InterPro" id="IPR005793">
    <property type="entry name" value="Formyl_trans_C"/>
</dbReference>
<dbReference type="InterPro" id="IPR002376">
    <property type="entry name" value="Formyl_transf_N"/>
</dbReference>
<dbReference type="InterPro" id="IPR036477">
    <property type="entry name" value="Formyl_transf_N_sf"/>
</dbReference>
<dbReference type="InterPro" id="IPR011034">
    <property type="entry name" value="Formyl_transferase-like_C_sf"/>
</dbReference>
<dbReference type="InterPro" id="IPR001555">
    <property type="entry name" value="GART_AS"/>
</dbReference>
<dbReference type="InterPro" id="IPR044135">
    <property type="entry name" value="Met-tRNA-FMT_C"/>
</dbReference>
<dbReference type="InterPro" id="IPR041711">
    <property type="entry name" value="Met-tRNA-FMT_N"/>
</dbReference>
<dbReference type="NCBIfam" id="TIGR00460">
    <property type="entry name" value="fmt"/>
    <property type="match status" value="1"/>
</dbReference>
<dbReference type="PANTHER" id="PTHR11138">
    <property type="entry name" value="METHIONYL-TRNA FORMYLTRANSFERASE"/>
    <property type="match status" value="1"/>
</dbReference>
<dbReference type="PANTHER" id="PTHR11138:SF5">
    <property type="entry name" value="METHIONYL-TRNA FORMYLTRANSFERASE, MITOCHONDRIAL"/>
    <property type="match status" value="1"/>
</dbReference>
<dbReference type="Pfam" id="PF02911">
    <property type="entry name" value="Formyl_trans_C"/>
    <property type="match status" value="1"/>
</dbReference>
<dbReference type="Pfam" id="PF00551">
    <property type="entry name" value="Formyl_trans_N"/>
    <property type="match status" value="1"/>
</dbReference>
<dbReference type="SUPFAM" id="SSF50486">
    <property type="entry name" value="FMT C-terminal domain-like"/>
    <property type="match status" value="1"/>
</dbReference>
<dbReference type="SUPFAM" id="SSF53328">
    <property type="entry name" value="Formyltransferase"/>
    <property type="match status" value="1"/>
</dbReference>
<dbReference type="PROSITE" id="PS00373">
    <property type="entry name" value="GART"/>
    <property type="match status" value="1"/>
</dbReference>
<reference key="1">
    <citation type="journal article" date="2009" name="Appl. Environ. Microbiol.">
        <title>Rhizobium sp. strain NGR234 possesses a remarkable number of secretion systems.</title>
        <authorList>
            <person name="Schmeisser C."/>
            <person name="Liesegang H."/>
            <person name="Krysciak D."/>
            <person name="Bakkou N."/>
            <person name="Le Quere A."/>
            <person name="Wollherr A."/>
            <person name="Heinemeyer I."/>
            <person name="Morgenstern B."/>
            <person name="Pommerening-Roeser A."/>
            <person name="Flores M."/>
            <person name="Palacios R."/>
            <person name="Brenner S."/>
            <person name="Gottschalk G."/>
            <person name="Schmitz R.A."/>
            <person name="Broughton W.J."/>
            <person name="Perret X."/>
            <person name="Strittmatter A.W."/>
            <person name="Streit W.R."/>
        </authorList>
    </citation>
    <scope>NUCLEOTIDE SEQUENCE [LARGE SCALE GENOMIC DNA]</scope>
    <source>
        <strain>NBRC 101917 / NGR234</strain>
    </source>
</reference>